<evidence type="ECO:0000255" key="1">
    <source>
        <dbReference type="HAMAP-Rule" id="MF_00394"/>
    </source>
</evidence>
<proteinExistence type="inferred from homology"/>
<gene>
    <name evidence="1" type="primary">gpsA</name>
    <name type="ordered locus">RHE_CH03902</name>
</gene>
<keyword id="KW-0963">Cytoplasm</keyword>
<keyword id="KW-0444">Lipid biosynthesis</keyword>
<keyword id="KW-0443">Lipid metabolism</keyword>
<keyword id="KW-0520">NAD</keyword>
<keyword id="KW-0521">NADP</keyword>
<keyword id="KW-0547">Nucleotide-binding</keyword>
<keyword id="KW-0560">Oxidoreductase</keyword>
<keyword id="KW-0594">Phospholipid biosynthesis</keyword>
<keyword id="KW-1208">Phospholipid metabolism</keyword>
<keyword id="KW-1185">Reference proteome</keyword>
<protein>
    <recommendedName>
        <fullName evidence="1">Glycerol-3-phosphate dehydrogenase [NAD(P)+]</fullName>
        <ecNumber evidence="1">1.1.1.94</ecNumber>
    </recommendedName>
    <alternativeName>
        <fullName evidence="1">NAD(P)(+)-dependent glycerol-3-phosphate dehydrogenase</fullName>
    </alternativeName>
    <alternativeName>
        <fullName evidence="1">NAD(P)H-dependent dihydroxyacetone-phosphate reductase</fullName>
    </alternativeName>
</protein>
<organism>
    <name type="scientific">Rhizobium etli (strain ATCC 51251 / DSM 11541 / JCM 21823 / NBRC 15573 / CFN 42)</name>
    <dbReference type="NCBI Taxonomy" id="347834"/>
    <lineage>
        <taxon>Bacteria</taxon>
        <taxon>Pseudomonadati</taxon>
        <taxon>Pseudomonadota</taxon>
        <taxon>Alphaproteobacteria</taxon>
        <taxon>Hyphomicrobiales</taxon>
        <taxon>Rhizobiaceae</taxon>
        <taxon>Rhizobium/Agrobacterium group</taxon>
        <taxon>Rhizobium</taxon>
    </lineage>
</organism>
<feature type="chain" id="PRO_0000255352" description="Glycerol-3-phosphate dehydrogenase [NAD(P)+]">
    <location>
        <begin position="1"/>
        <end position="327"/>
    </location>
</feature>
<feature type="active site" description="Proton acceptor" evidence="1">
    <location>
        <position position="190"/>
    </location>
</feature>
<feature type="binding site" evidence="1">
    <location>
        <position position="13"/>
    </location>
    <ligand>
        <name>NADPH</name>
        <dbReference type="ChEBI" id="CHEBI:57783"/>
    </ligand>
</feature>
<feature type="binding site" evidence="1">
    <location>
        <position position="34"/>
    </location>
    <ligand>
        <name>NADPH</name>
        <dbReference type="ChEBI" id="CHEBI:57783"/>
    </ligand>
</feature>
<feature type="binding site" evidence="1">
    <location>
        <position position="107"/>
    </location>
    <ligand>
        <name>NADPH</name>
        <dbReference type="ChEBI" id="CHEBI:57783"/>
    </ligand>
</feature>
<feature type="binding site" evidence="1">
    <location>
        <position position="107"/>
    </location>
    <ligand>
        <name>sn-glycerol 3-phosphate</name>
        <dbReference type="ChEBI" id="CHEBI:57597"/>
    </ligand>
</feature>
<feature type="binding site" evidence="1">
    <location>
        <position position="135"/>
    </location>
    <ligand>
        <name>sn-glycerol 3-phosphate</name>
        <dbReference type="ChEBI" id="CHEBI:57597"/>
    </ligand>
</feature>
<feature type="binding site" evidence="1">
    <location>
        <position position="139"/>
    </location>
    <ligand>
        <name>NADPH</name>
        <dbReference type="ChEBI" id="CHEBI:57783"/>
    </ligand>
</feature>
<feature type="binding site" evidence="1">
    <location>
        <position position="190"/>
    </location>
    <ligand>
        <name>sn-glycerol 3-phosphate</name>
        <dbReference type="ChEBI" id="CHEBI:57597"/>
    </ligand>
</feature>
<feature type="binding site" evidence="1">
    <location>
        <position position="243"/>
    </location>
    <ligand>
        <name>sn-glycerol 3-phosphate</name>
        <dbReference type="ChEBI" id="CHEBI:57597"/>
    </ligand>
</feature>
<feature type="binding site" evidence="1">
    <location>
        <position position="253"/>
    </location>
    <ligand>
        <name>sn-glycerol 3-phosphate</name>
        <dbReference type="ChEBI" id="CHEBI:57597"/>
    </ligand>
</feature>
<feature type="binding site" evidence="1">
    <location>
        <position position="254"/>
    </location>
    <ligand>
        <name>NADPH</name>
        <dbReference type="ChEBI" id="CHEBI:57783"/>
    </ligand>
</feature>
<feature type="binding site" evidence="1">
    <location>
        <position position="254"/>
    </location>
    <ligand>
        <name>sn-glycerol 3-phosphate</name>
        <dbReference type="ChEBI" id="CHEBI:57597"/>
    </ligand>
</feature>
<feature type="binding site" evidence="1">
    <location>
        <position position="255"/>
    </location>
    <ligand>
        <name>sn-glycerol 3-phosphate</name>
        <dbReference type="ChEBI" id="CHEBI:57597"/>
    </ligand>
</feature>
<feature type="binding site" evidence="1">
    <location>
        <position position="276"/>
    </location>
    <ligand>
        <name>NADPH</name>
        <dbReference type="ChEBI" id="CHEBI:57783"/>
    </ligand>
</feature>
<feature type="binding site" evidence="1">
    <location>
        <position position="277"/>
    </location>
    <ligand>
        <name>NADPH</name>
        <dbReference type="ChEBI" id="CHEBI:57783"/>
    </ligand>
</feature>
<comment type="function">
    <text evidence="1">Catalyzes the reduction of the glycolytic intermediate dihydroxyacetone phosphate (DHAP) to sn-glycerol 3-phosphate (G3P), the key precursor for phospholipid synthesis.</text>
</comment>
<comment type="catalytic activity">
    <reaction evidence="1">
        <text>sn-glycerol 3-phosphate + NAD(+) = dihydroxyacetone phosphate + NADH + H(+)</text>
        <dbReference type="Rhea" id="RHEA:11092"/>
        <dbReference type="ChEBI" id="CHEBI:15378"/>
        <dbReference type="ChEBI" id="CHEBI:57540"/>
        <dbReference type="ChEBI" id="CHEBI:57597"/>
        <dbReference type="ChEBI" id="CHEBI:57642"/>
        <dbReference type="ChEBI" id="CHEBI:57945"/>
        <dbReference type="EC" id="1.1.1.94"/>
    </reaction>
    <physiologicalReaction direction="right-to-left" evidence="1">
        <dbReference type="Rhea" id="RHEA:11094"/>
    </physiologicalReaction>
</comment>
<comment type="catalytic activity">
    <reaction evidence="1">
        <text>sn-glycerol 3-phosphate + NADP(+) = dihydroxyacetone phosphate + NADPH + H(+)</text>
        <dbReference type="Rhea" id="RHEA:11096"/>
        <dbReference type="ChEBI" id="CHEBI:15378"/>
        <dbReference type="ChEBI" id="CHEBI:57597"/>
        <dbReference type="ChEBI" id="CHEBI:57642"/>
        <dbReference type="ChEBI" id="CHEBI:57783"/>
        <dbReference type="ChEBI" id="CHEBI:58349"/>
        <dbReference type="EC" id="1.1.1.94"/>
    </reaction>
    <physiologicalReaction direction="right-to-left" evidence="1">
        <dbReference type="Rhea" id="RHEA:11098"/>
    </physiologicalReaction>
</comment>
<comment type="pathway">
    <text evidence="1">Membrane lipid metabolism; glycerophospholipid metabolism.</text>
</comment>
<comment type="subcellular location">
    <subcellularLocation>
        <location evidence="1">Cytoplasm</location>
    </subcellularLocation>
</comment>
<comment type="similarity">
    <text evidence="1">Belongs to the NAD-dependent glycerol-3-phosphate dehydrogenase family.</text>
</comment>
<name>GPDA_RHIEC</name>
<accession>Q2K3D8</accession>
<dbReference type="EC" id="1.1.1.94" evidence="1"/>
<dbReference type="EMBL" id="CP000133">
    <property type="protein sequence ID" value="ABC92648.1"/>
    <property type="molecule type" value="Genomic_DNA"/>
</dbReference>
<dbReference type="RefSeq" id="WP_011427095.1">
    <property type="nucleotide sequence ID" value="NC_007761.1"/>
</dbReference>
<dbReference type="SMR" id="Q2K3D8"/>
<dbReference type="KEGG" id="ret:RHE_CH03902"/>
<dbReference type="eggNOG" id="COG0240">
    <property type="taxonomic scope" value="Bacteria"/>
</dbReference>
<dbReference type="HOGENOM" id="CLU_033449_0_2_5"/>
<dbReference type="OrthoDB" id="9812273at2"/>
<dbReference type="UniPathway" id="UPA00940"/>
<dbReference type="Proteomes" id="UP000001936">
    <property type="component" value="Chromosome"/>
</dbReference>
<dbReference type="GO" id="GO:0005829">
    <property type="term" value="C:cytosol"/>
    <property type="evidence" value="ECO:0007669"/>
    <property type="project" value="TreeGrafter"/>
</dbReference>
<dbReference type="GO" id="GO:0047952">
    <property type="term" value="F:glycerol-3-phosphate dehydrogenase [NAD(P)+] activity"/>
    <property type="evidence" value="ECO:0007669"/>
    <property type="project" value="UniProtKB-UniRule"/>
</dbReference>
<dbReference type="GO" id="GO:0051287">
    <property type="term" value="F:NAD binding"/>
    <property type="evidence" value="ECO:0007669"/>
    <property type="project" value="InterPro"/>
</dbReference>
<dbReference type="GO" id="GO:0005975">
    <property type="term" value="P:carbohydrate metabolic process"/>
    <property type="evidence" value="ECO:0007669"/>
    <property type="project" value="InterPro"/>
</dbReference>
<dbReference type="GO" id="GO:0046167">
    <property type="term" value="P:glycerol-3-phosphate biosynthetic process"/>
    <property type="evidence" value="ECO:0007669"/>
    <property type="project" value="UniProtKB-UniRule"/>
</dbReference>
<dbReference type="GO" id="GO:0046168">
    <property type="term" value="P:glycerol-3-phosphate catabolic process"/>
    <property type="evidence" value="ECO:0007669"/>
    <property type="project" value="InterPro"/>
</dbReference>
<dbReference type="GO" id="GO:0006650">
    <property type="term" value="P:glycerophospholipid metabolic process"/>
    <property type="evidence" value="ECO:0007669"/>
    <property type="project" value="UniProtKB-UniRule"/>
</dbReference>
<dbReference type="GO" id="GO:0008654">
    <property type="term" value="P:phospholipid biosynthetic process"/>
    <property type="evidence" value="ECO:0007669"/>
    <property type="project" value="UniProtKB-KW"/>
</dbReference>
<dbReference type="FunFam" id="3.40.50.720:FF:000019">
    <property type="entry name" value="Glycerol-3-phosphate dehydrogenase [NAD(P)+]"/>
    <property type="match status" value="1"/>
</dbReference>
<dbReference type="Gene3D" id="1.10.1040.10">
    <property type="entry name" value="N-(1-d-carboxylethyl)-l-norvaline Dehydrogenase, domain 2"/>
    <property type="match status" value="1"/>
</dbReference>
<dbReference type="Gene3D" id="3.40.50.720">
    <property type="entry name" value="NAD(P)-binding Rossmann-like Domain"/>
    <property type="match status" value="1"/>
</dbReference>
<dbReference type="HAMAP" id="MF_00394">
    <property type="entry name" value="NAD_Glyc3P_dehydrog"/>
    <property type="match status" value="1"/>
</dbReference>
<dbReference type="InterPro" id="IPR008927">
    <property type="entry name" value="6-PGluconate_DH-like_C_sf"/>
</dbReference>
<dbReference type="InterPro" id="IPR013328">
    <property type="entry name" value="6PGD_dom2"/>
</dbReference>
<dbReference type="InterPro" id="IPR006168">
    <property type="entry name" value="G3P_DH_NAD-dep"/>
</dbReference>
<dbReference type="InterPro" id="IPR006109">
    <property type="entry name" value="G3P_DH_NAD-dep_C"/>
</dbReference>
<dbReference type="InterPro" id="IPR011128">
    <property type="entry name" value="G3P_DH_NAD-dep_N"/>
</dbReference>
<dbReference type="InterPro" id="IPR036291">
    <property type="entry name" value="NAD(P)-bd_dom_sf"/>
</dbReference>
<dbReference type="NCBIfam" id="NF000940">
    <property type="entry name" value="PRK00094.1-2"/>
    <property type="match status" value="1"/>
</dbReference>
<dbReference type="NCBIfam" id="NF000942">
    <property type="entry name" value="PRK00094.1-4"/>
    <property type="match status" value="1"/>
</dbReference>
<dbReference type="PANTHER" id="PTHR11728">
    <property type="entry name" value="GLYCEROL-3-PHOSPHATE DEHYDROGENASE"/>
    <property type="match status" value="1"/>
</dbReference>
<dbReference type="PANTHER" id="PTHR11728:SF1">
    <property type="entry name" value="GLYCEROL-3-PHOSPHATE DEHYDROGENASE [NAD(+)] 2, CHLOROPLASTIC"/>
    <property type="match status" value="1"/>
</dbReference>
<dbReference type="Pfam" id="PF07479">
    <property type="entry name" value="NAD_Gly3P_dh_C"/>
    <property type="match status" value="1"/>
</dbReference>
<dbReference type="Pfam" id="PF01210">
    <property type="entry name" value="NAD_Gly3P_dh_N"/>
    <property type="match status" value="1"/>
</dbReference>
<dbReference type="PIRSF" id="PIRSF000114">
    <property type="entry name" value="Glycerol-3-P_dh"/>
    <property type="match status" value="1"/>
</dbReference>
<dbReference type="PRINTS" id="PR00077">
    <property type="entry name" value="GPDHDRGNASE"/>
</dbReference>
<dbReference type="SUPFAM" id="SSF48179">
    <property type="entry name" value="6-phosphogluconate dehydrogenase C-terminal domain-like"/>
    <property type="match status" value="1"/>
</dbReference>
<dbReference type="SUPFAM" id="SSF51735">
    <property type="entry name" value="NAD(P)-binding Rossmann-fold domains"/>
    <property type="match status" value="1"/>
</dbReference>
<dbReference type="PROSITE" id="PS00957">
    <property type="entry name" value="NAD_G3PDH"/>
    <property type="match status" value="1"/>
</dbReference>
<reference key="1">
    <citation type="journal article" date="2006" name="Proc. Natl. Acad. Sci. U.S.A.">
        <title>The partitioned Rhizobium etli genome: genetic and metabolic redundancy in seven interacting replicons.</title>
        <authorList>
            <person name="Gonzalez V."/>
            <person name="Santamaria R.I."/>
            <person name="Bustos P."/>
            <person name="Hernandez-Gonzalez I."/>
            <person name="Medrano-Soto A."/>
            <person name="Moreno-Hagelsieb G."/>
            <person name="Janga S.C."/>
            <person name="Ramirez M.A."/>
            <person name="Jimenez-Jacinto V."/>
            <person name="Collado-Vides J."/>
            <person name="Davila G."/>
        </authorList>
    </citation>
    <scope>NUCLEOTIDE SEQUENCE [LARGE SCALE GENOMIC DNA]</scope>
    <source>
        <strain>ATCC 51251 / DSM 11541 / JCM 21823 / NBRC 15573 / CFN 42</strain>
    </source>
</reference>
<sequence length="327" mass="33543">MSEKIAVIGSGAFGTALAAVIALAGRSAVTLVGRNPSLMADLKSERLHDAVLPGIVLPESLEFSAEAEAVAGASIVLFAMPSQAQADAVRQYGLYLSKDAVVVTCAKGIERTTGNLLTDMLERELPDHPVAVLSGPGFAADIAKGLPTAMAIAADGMETAERLAQAISGRTFRLYASTDRIGVQLGGALKNVLAIACGIVEGRGIGESARAALIARGLAEMSRFVVAKGGQADTVRGLSGLGDLVLTATSHQSRNLRFGIALGRGEKTDPAHGALVEGAFAASVASRLAAELSISMPITDAVSAIIDGRLDISDAIEQLMTRPITTE</sequence>